<evidence type="ECO:0000255" key="1">
    <source>
        <dbReference type="HAMAP-Rule" id="MF_00083"/>
    </source>
</evidence>
<reference key="1">
    <citation type="journal article" date="2008" name="J. Bacteriol.">
        <title>Genome sequence of the chemolithoautotrophic bacterium Oligotropha carboxidovorans OM5T.</title>
        <authorList>
            <person name="Paul D."/>
            <person name="Bridges S."/>
            <person name="Burgess S.C."/>
            <person name="Dandass Y."/>
            <person name="Lawrence M.L."/>
        </authorList>
    </citation>
    <scope>NUCLEOTIDE SEQUENCE [LARGE SCALE GENOMIC DNA]</scope>
    <source>
        <strain>ATCC 49405 / DSM 1227 / KCTC 32145 / OM5</strain>
    </source>
</reference>
<reference key="2">
    <citation type="journal article" date="2011" name="J. Bacteriol.">
        <title>Complete genome sequences of the chemolithoautotrophic Oligotropha carboxidovorans strains OM4 and OM5.</title>
        <authorList>
            <person name="Volland S."/>
            <person name="Rachinger M."/>
            <person name="Strittmatter A."/>
            <person name="Daniel R."/>
            <person name="Gottschalk G."/>
            <person name="Meyer O."/>
        </authorList>
    </citation>
    <scope>NUCLEOTIDE SEQUENCE [LARGE SCALE GENOMIC DNA]</scope>
    <source>
        <strain>ATCC 49405 / DSM 1227 / KCTC 32145 / OM5</strain>
    </source>
</reference>
<sequence>MRLFVGLGNPGSKYEGNRHNIGFMVVDEIARRHGFSPWRRRFQGETSEGVLGGERVVLLKPATYMNESGRAVQEAAKFFKLGESEVVVFHDEIELPPAKMRVKVGGGIAGHNGLRSISAHLGNEYRRVRLGVGHPGVKEIVHIHVLNDFAKSERPWVAALCETVAEHAELLVSGKDSQFQNRVHLAMDAKGFATENNGGKD</sequence>
<organism>
    <name type="scientific">Afipia carboxidovorans (strain ATCC 49405 / DSM 1227 / KCTC 32145 / OM5)</name>
    <name type="common">Oligotropha carboxidovorans</name>
    <dbReference type="NCBI Taxonomy" id="504832"/>
    <lineage>
        <taxon>Bacteria</taxon>
        <taxon>Pseudomonadati</taxon>
        <taxon>Pseudomonadota</taxon>
        <taxon>Alphaproteobacteria</taxon>
        <taxon>Hyphomicrobiales</taxon>
        <taxon>Nitrobacteraceae</taxon>
        <taxon>Afipia</taxon>
    </lineage>
</organism>
<gene>
    <name evidence="1" type="primary">pth</name>
    <name type="ordered locus">OCAR_7189</name>
    <name type="ordered locus">OCA5_c09200</name>
</gene>
<name>PTH_AFIC5</name>
<proteinExistence type="inferred from homology"/>
<dbReference type="EC" id="3.1.1.29" evidence="1"/>
<dbReference type="EMBL" id="CP001196">
    <property type="protein sequence ID" value="ACI94293.1"/>
    <property type="molecule type" value="Genomic_DNA"/>
</dbReference>
<dbReference type="EMBL" id="CP002826">
    <property type="protein sequence ID" value="AEI05642.1"/>
    <property type="molecule type" value="Genomic_DNA"/>
</dbReference>
<dbReference type="RefSeq" id="WP_012564319.1">
    <property type="nucleotide sequence ID" value="NC_015684.1"/>
</dbReference>
<dbReference type="SMR" id="B6JIP3"/>
<dbReference type="STRING" id="504832.OCA5_c09200"/>
<dbReference type="KEGG" id="oca:OCAR_7189"/>
<dbReference type="KEGG" id="ocg:OCA5_c09200"/>
<dbReference type="PATRIC" id="fig|504832.7.peg.973"/>
<dbReference type="eggNOG" id="COG0193">
    <property type="taxonomic scope" value="Bacteria"/>
</dbReference>
<dbReference type="HOGENOM" id="CLU_062456_1_0_5"/>
<dbReference type="OrthoDB" id="9800507at2"/>
<dbReference type="Proteomes" id="UP000007730">
    <property type="component" value="Chromosome"/>
</dbReference>
<dbReference type="GO" id="GO:0005737">
    <property type="term" value="C:cytoplasm"/>
    <property type="evidence" value="ECO:0007669"/>
    <property type="project" value="UniProtKB-SubCell"/>
</dbReference>
<dbReference type="GO" id="GO:0004045">
    <property type="term" value="F:peptidyl-tRNA hydrolase activity"/>
    <property type="evidence" value="ECO:0007669"/>
    <property type="project" value="UniProtKB-UniRule"/>
</dbReference>
<dbReference type="GO" id="GO:0000049">
    <property type="term" value="F:tRNA binding"/>
    <property type="evidence" value="ECO:0007669"/>
    <property type="project" value="UniProtKB-UniRule"/>
</dbReference>
<dbReference type="GO" id="GO:0006515">
    <property type="term" value="P:protein quality control for misfolded or incompletely synthesized proteins"/>
    <property type="evidence" value="ECO:0007669"/>
    <property type="project" value="UniProtKB-UniRule"/>
</dbReference>
<dbReference type="GO" id="GO:0072344">
    <property type="term" value="P:rescue of stalled ribosome"/>
    <property type="evidence" value="ECO:0007669"/>
    <property type="project" value="UniProtKB-UniRule"/>
</dbReference>
<dbReference type="CDD" id="cd00462">
    <property type="entry name" value="PTH"/>
    <property type="match status" value="1"/>
</dbReference>
<dbReference type="FunFam" id="3.40.50.1470:FF:000001">
    <property type="entry name" value="Peptidyl-tRNA hydrolase"/>
    <property type="match status" value="1"/>
</dbReference>
<dbReference type="Gene3D" id="3.40.50.1470">
    <property type="entry name" value="Peptidyl-tRNA hydrolase"/>
    <property type="match status" value="1"/>
</dbReference>
<dbReference type="HAMAP" id="MF_00083">
    <property type="entry name" value="Pept_tRNA_hydro_bact"/>
    <property type="match status" value="1"/>
</dbReference>
<dbReference type="InterPro" id="IPR001328">
    <property type="entry name" value="Pept_tRNA_hydro"/>
</dbReference>
<dbReference type="InterPro" id="IPR018171">
    <property type="entry name" value="Pept_tRNA_hydro_CS"/>
</dbReference>
<dbReference type="InterPro" id="IPR036416">
    <property type="entry name" value="Pept_tRNA_hydro_sf"/>
</dbReference>
<dbReference type="NCBIfam" id="TIGR00447">
    <property type="entry name" value="pth"/>
    <property type="match status" value="1"/>
</dbReference>
<dbReference type="PANTHER" id="PTHR17224">
    <property type="entry name" value="PEPTIDYL-TRNA HYDROLASE"/>
    <property type="match status" value="1"/>
</dbReference>
<dbReference type="PANTHER" id="PTHR17224:SF1">
    <property type="entry name" value="PEPTIDYL-TRNA HYDROLASE"/>
    <property type="match status" value="1"/>
</dbReference>
<dbReference type="Pfam" id="PF01195">
    <property type="entry name" value="Pept_tRNA_hydro"/>
    <property type="match status" value="1"/>
</dbReference>
<dbReference type="SUPFAM" id="SSF53178">
    <property type="entry name" value="Peptidyl-tRNA hydrolase-like"/>
    <property type="match status" value="1"/>
</dbReference>
<dbReference type="PROSITE" id="PS01195">
    <property type="entry name" value="PEPT_TRNA_HYDROL_1"/>
    <property type="match status" value="1"/>
</dbReference>
<dbReference type="PROSITE" id="PS01196">
    <property type="entry name" value="PEPT_TRNA_HYDROL_2"/>
    <property type="match status" value="1"/>
</dbReference>
<protein>
    <recommendedName>
        <fullName evidence="1">Peptidyl-tRNA hydrolase</fullName>
        <shortName evidence="1">Pth</shortName>
        <ecNumber evidence="1">3.1.1.29</ecNumber>
    </recommendedName>
</protein>
<comment type="function">
    <text evidence="1">Hydrolyzes ribosome-free peptidyl-tRNAs (with 1 or more amino acids incorporated), which drop off the ribosome during protein synthesis, or as a result of ribosome stalling.</text>
</comment>
<comment type="function">
    <text evidence="1">Catalyzes the release of premature peptidyl moieties from peptidyl-tRNA molecules trapped in stalled 50S ribosomal subunits, and thus maintains levels of free tRNAs and 50S ribosomes.</text>
</comment>
<comment type="catalytic activity">
    <reaction evidence="1">
        <text>an N-acyl-L-alpha-aminoacyl-tRNA + H2O = an N-acyl-L-amino acid + a tRNA + H(+)</text>
        <dbReference type="Rhea" id="RHEA:54448"/>
        <dbReference type="Rhea" id="RHEA-COMP:10123"/>
        <dbReference type="Rhea" id="RHEA-COMP:13883"/>
        <dbReference type="ChEBI" id="CHEBI:15377"/>
        <dbReference type="ChEBI" id="CHEBI:15378"/>
        <dbReference type="ChEBI" id="CHEBI:59874"/>
        <dbReference type="ChEBI" id="CHEBI:78442"/>
        <dbReference type="ChEBI" id="CHEBI:138191"/>
        <dbReference type="EC" id="3.1.1.29"/>
    </reaction>
</comment>
<comment type="subunit">
    <text evidence="1">Monomer.</text>
</comment>
<comment type="subcellular location">
    <subcellularLocation>
        <location evidence="1">Cytoplasm</location>
    </subcellularLocation>
</comment>
<comment type="similarity">
    <text evidence="1">Belongs to the PTH family.</text>
</comment>
<feature type="chain" id="PRO_1000092964" description="Peptidyl-tRNA hydrolase">
    <location>
        <begin position="1"/>
        <end position="201"/>
    </location>
</feature>
<feature type="active site" description="Proton acceptor" evidence="1">
    <location>
        <position position="19"/>
    </location>
</feature>
<feature type="binding site" evidence="1">
    <location>
        <position position="14"/>
    </location>
    <ligand>
        <name>tRNA</name>
        <dbReference type="ChEBI" id="CHEBI:17843"/>
    </ligand>
</feature>
<feature type="binding site" evidence="1">
    <location>
        <position position="64"/>
    </location>
    <ligand>
        <name>tRNA</name>
        <dbReference type="ChEBI" id="CHEBI:17843"/>
    </ligand>
</feature>
<feature type="binding site" evidence="1">
    <location>
        <position position="66"/>
    </location>
    <ligand>
        <name>tRNA</name>
        <dbReference type="ChEBI" id="CHEBI:17843"/>
    </ligand>
</feature>
<feature type="binding site" evidence="1">
    <location>
        <position position="112"/>
    </location>
    <ligand>
        <name>tRNA</name>
        <dbReference type="ChEBI" id="CHEBI:17843"/>
    </ligand>
</feature>
<feature type="site" description="Discriminates between blocked and unblocked aminoacyl-tRNA" evidence="1">
    <location>
        <position position="9"/>
    </location>
</feature>
<feature type="site" description="Stabilizes the basic form of H active site to accept a proton" evidence="1">
    <location>
        <position position="91"/>
    </location>
</feature>
<keyword id="KW-0963">Cytoplasm</keyword>
<keyword id="KW-0378">Hydrolase</keyword>
<keyword id="KW-1185">Reference proteome</keyword>
<keyword id="KW-0694">RNA-binding</keyword>
<keyword id="KW-0820">tRNA-binding</keyword>
<accession>B6JIP3</accession>
<accession>F8C0H1</accession>